<reference key="1">
    <citation type="journal article" date="2002" name="J. Bacteriol.">
        <title>Whole-genome comparison of Mycobacterium tuberculosis clinical and laboratory strains.</title>
        <authorList>
            <person name="Fleischmann R.D."/>
            <person name="Alland D."/>
            <person name="Eisen J.A."/>
            <person name="Carpenter L."/>
            <person name="White O."/>
            <person name="Peterson J.D."/>
            <person name="DeBoy R.T."/>
            <person name="Dodson R.J."/>
            <person name="Gwinn M.L."/>
            <person name="Haft D.H."/>
            <person name="Hickey E.K."/>
            <person name="Kolonay J.F."/>
            <person name="Nelson W.C."/>
            <person name="Umayam L.A."/>
            <person name="Ermolaeva M.D."/>
            <person name="Salzberg S.L."/>
            <person name="Delcher A."/>
            <person name="Utterback T.R."/>
            <person name="Weidman J.F."/>
            <person name="Khouri H.M."/>
            <person name="Gill J."/>
            <person name="Mikula A."/>
            <person name="Bishai W."/>
            <person name="Jacobs W.R. Jr."/>
            <person name="Venter J.C."/>
            <person name="Fraser C.M."/>
        </authorList>
    </citation>
    <scope>NUCLEOTIDE SEQUENCE [LARGE SCALE GENOMIC DNA]</scope>
    <source>
        <strain>CDC 1551 / Oshkosh</strain>
    </source>
</reference>
<comment type="similarity">
    <text evidence="1">Belongs to the UPF0045 family.</text>
</comment>
<accession>P9WFQ0</accession>
<accession>L0TAR0</accession>
<accession>O07734</accession>
<accession>P67119</accession>
<gene>
    <name type="ordered locus">MT1949</name>
</gene>
<proteinExistence type="inferred from homology"/>
<sequence>MSVLVAFSVTPLGVGEGVGEIVTEAIRVVRDSGLPNQTDAMFTVIEGDTWAEVMAVVQRAVEAVAARAPRVSAVIKVDWRPGVTDAMTQKVATVERYLLRPE</sequence>
<protein>
    <recommendedName>
        <fullName>UPF0045 protein MT1949</fullName>
    </recommendedName>
</protein>
<evidence type="ECO:0000305" key="1"/>
<organism>
    <name type="scientific">Mycobacterium tuberculosis (strain CDC 1551 / Oshkosh)</name>
    <dbReference type="NCBI Taxonomy" id="83331"/>
    <lineage>
        <taxon>Bacteria</taxon>
        <taxon>Bacillati</taxon>
        <taxon>Actinomycetota</taxon>
        <taxon>Actinomycetes</taxon>
        <taxon>Mycobacteriales</taxon>
        <taxon>Mycobacteriaceae</taxon>
        <taxon>Mycobacterium</taxon>
        <taxon>Mycobacterium tuberculosis complex</taxon>
    </lineage>
</organism>
<feature type="chain" id="PRO_0000428498" description="UPF0045 protein MT1949">
    <location>
        <begin position="1"/>
        <end position="102"/>
    </location>
</feature>
<name>Y1898_MYCTO</name>
<dbReference type="EMBL" id="AE000516">
    <property type="protein sequence ID" value="AAK46220.1"/>
    <property type="molecule type" value="Genomic_DNA"/>
</dbReference>
<dbReference type="PIR" id="G70517">
    <property type="entry name" value="G70517"/>
</dbReference>
<dbReference type="RefSeq" id="WP_003409536.1">
    <property type="nucleotide sequence ID" value="NZ_KK341227.1"/>
</dbReference>
<dbReference type="SMR" id="P9WFQ0"/>
<dbReference type="KEGG" id="mtc:MT1949"/>
<dbReference type="PATRIC" id="fig|83331.31.peg.2097"/>
<dbReference type="HOGENOM" id="CLU_137479_1_0_11"/>
<dbReference type="Proteomes" id="UP000001020">
    <property type="component" value="Chromosome"/>
</dbReference>
<dbReference type="GO" id="GO:0005829">
    <property type="term" value="C:cytosol"/>
    <property type="evidence" value="ECO:0007669"/>
    <property type="project" value="TreeGrafter"/>
</dbReference>
<dbReference type="Gene3D" id="3.30.70.930">
    <property type="match status" value="1"/>
</dbReference>
<dbReference type="InterPro" id="IPR029756">
    <property type="entry name" value="MTH1187/YkoF-like"/>
</dbReference>
<dbReference type="InterPro" id="IPR002767">
    <property type="entry name" value="Thiamine_BP"/>
</dbReference>
<dbReference type="InterPro" id="IPR051614">
    <property type="entry name" value="UPF0045_domain"/>
</dbReference>
<dbReference type="NCBIfam" id="TIGR00106">
    <property type="entry name" value="MTH1187 family thiamine-binding protein"/>
    <property type="match status" value="1"/>
</dbReference>
<dbReference type="PANTHER" id="PTHR33777">
    <property type="entry name" value="UPF0045 PROTEIN ECM15"/>
    <property type="match status" value="1"/>
</dbReference>
<dbReference type="PANTHER" id="PTHR33777:SF1">
    <property type="entry name" value="UPF0045 PROTEIN ECM15"/>
    <property type="match status" value="1"/>
</dbReference>
<dbReference type="Pfam" id="PF01910">
    <property type="entry name" value="Thiamine_BP"/>
    <property type="match status" value="1"/>
</dbReference>
<dbReference type="SUPFAM" id="SSF89957">
    <property type="entry name" value="MTH1187/YkoF-like"/>
    <property type="match status" value="1"/>
</dbReference>
<keyword id="KW-1185">Reference proteome</keyword>